<accession>Q0KF58</accession>
<reference key="1">
    <citation type="journal article" date="2006" name="Nat. Biotechnol.">
        <title>Genome sequence of the bioplastic-producing 'Knallgas' bacterium Ralstonia eutropha H16.</title>
        <authorList>
            <person name="Pohlmann A."/>
            <person name="Fricke W.F."/>
            <person name="Reinecke F."/>
            <person name="Kusian B."/>
            <person name="Liesegang H."/>
            <person name="Cramm R."/>
            <person name="Eitinger T."/>
            <person name="Ewering C."/>
            <person name="Poetter M."/>
            <person name="Schwartz E."/>
            <person name="Strittmatter A."/>
            <person name="Voss I."/>
            <person name="Gottschalk G."/>
            <person name="Steinbuechel A."/>
            <person name="Friedrich B."/>
            <person name="Bowien B."/>
        </authorList>
    </citation>
    <scope>NUCLEOTIDE SEQUENCE [LARGE SCALE GENOMIC DNA]</scope>
    <source>
        <strain>ATCC 17699 / DSM 428 / KCTC 22496 / NCIMB 10442 / H16 / Stanier 337</strain>
    </source>
</reference>
<keyword id="KW-0012">Acyltransferase</keyword>
<keyword id="KW-0028">Amino-acid biosynthesis</keyword>
<keyword id="KW-0963">Cytoplasm</keyword>
<keyword id="KW-0486">Methionine biosynthesis</keyword>
<keyword id="KW-1185">Reference proteome</keyword>
<keyword id="KW-0808">Transferase</keyword>
<feature type="chain" id="PRO_1000021899" description="Homoserine O-succinyltransferase">
    <location>
        <begin position="1"/>
        <end position="393"/>
    </location>
</feature>
<feature type="domain" description="AB hydrolase-1" evidence="1">
    <location>
        <begin position="62"/>
        <end position="372"/>
    </location>
</feature>
<feature type="active site" description="Nucleophile" evidence="1">
    <location>
        <position position="168"/>
    </location>
</feature>
<feature type="active site" evidence="1">
    <location>
        <position position="333"/>
    </location>
</feature>
<feature type="active site" evidence="1">
    <location>
        <position position="366"/>
    </location>
</feature>
<feature type="binding site" evidence="1">
    <location>
        <position position="238"/>
    </location>
    <ligand>
        <name>substrate</name>
    </ligand>
</feature>
<feature type="binding site" evidence="1">
    <location>
        <position position="367"/>
    </location>
    <ligand>
        <name>substrate</name>
    </ligand>
</feature>
<feature type="site" description="Important for acyl-CoA specificity" evidence="1">
    <location>
        <position position="335"/>
    </location>
</feature>
<name>METXS_CUPNH</name>
<protein>
    <recommendedName>
        <fullName evidence="1">Homoserine O-succinyltransferase</fullName>
        <shortName evidence="1">HST</shortName>
        <ecNumber evidence="1">2.3.1.46</ecNumber>
    </recommendedName>
    <alternativeName>
        <fullName evidence="1">Homoserine transsuccinylase</fullName>
        <shortName evidence="1">HTS</shortName>
    </alternativeName>
</protein>
<gene>
    <name evidence="1" type="primary">metXS</name>
    <name type="ordered locus">H16_A0211</name>
</gene>
<evidence type="ECO:0000255" key="1">
    <source>
        <dbReference type="HAMAP-Rule" id="MF_00296"/>
    </source>
</evidence>
<proteinExistence type="inferred from homology"/>
<organism>
    <name type="scientific">Cupriavidus necator (strain ATCC 17699 / DSM 428 / KCTC 22496 / NCIMB 10442 / H16 / Stanier 337)</name>
    <name type="common">Ralstonia eutropha</name>
    <dbReference type="NCBI Taxonomy" id="381666"/>
    <lineage>
        <taxon>Bacteria</taxon>
        <taxon>Pseudomonadati</taxon>
        <taxon>Pseudomonadota</taxon>
        <taxon>Betaproteobacteria</taxon>
        <taxon>Burkholderiales</taxon>
        <taxon>Burkholderiaceae</taxon>
        <taxon>Cupriavidus</taxon>
    </lineage>
</organism>
<comment type="function">
    <text evidence="1">Transfers a succinyl group from succinyl-CoA to L-homoserine, forming succinyl-L-homoserine.</text>
</comment>
<comment type="catalytic activity">
    <reaction evidence="1">
        <text>L-homoserine + succinyl-CoA = O-succinyl-L-homoserine + CoA</text>
        <dbReference type="Rhea" id="RHEA:22008"/>
        <dbReference type="ChEBI" id="CHEBI:57287"/>
        <dbReference type="ChEBI" id="CHEBI:57292"/>
        <dbReference type="ChEBI" id="CHEBI:57476"/>
        <dbReference type="ChEBI" id="CHEBI:57661"/>
        <dbReference type="EC" id="2.3.1.46"/>
    </reaction>
</comment>
<comment type="pathway">
    <text evidence="1">Amino-acid biosynthesis; L-methionine biosynthesis via de novo pathway; O-succinyl-L-homoserine from L-homoserine: step 1/1.</text>
</comment>
<comment type="subunit">
    <text evidence="1">Homodimer.</text>
</comment>
<comment type="subcellular location">
    <subcellularLocation>
        <location evidence="1">Cytoplasm</location>
    </subcellularLocation>
</comment>
<comment type="similarity">
    <text evidence="1">Belongs to the AB hydrolase superfamily. MetX family.</text>
</comment>
<dbReference type="EC" id="2.3.1.46" evidence="1"/>
<dbReference type="EMBL" id="AM260479">
    <property type="protein sequence ID" value="CAJ91363.1"/>
    <property type="molecule type" value="Genomic_DNA"/>
</dbReference>
<dbReference type="RefSeq" id="WP_011614402.1">
    <property type="nucleotide sequence ID" value="NC_008313.1"/>
</dbReference>
<dbReference type="SMR" id="Q0KF58"/>
<dbReference type="STRING" id="381666.H16_A0211"/>
<dbReference type="ESTHER" id="cuppj-metx">
    <property type="family name" value="Homoserine_transacetylase"/>
</dbReference>
<dbReference type="KEGG" id="reh:H16_A0211"/>
<dbReference type="PATRIC" id="fig|381666.6.peg.570"/>
<dbReference type="eggNOG" id="COG2021">
    <property type="taxonomic scope" value="Bacteria"/>
</dbReference>
<dbReference type="HOGENOM" id="CLU_028760_1_2_4"/>
<dbReference type="OrthoDB" id="9800754at2"/>
<dbReference type="UniPathway" id="UPA00051">
    <property type="reaction ID" value="UER00075"/>
</dbReference>
<dbReference type="Proteomes" id="UP000008210">
    <property type="component" value="Chromosome 1"/>
</dbReference>
<dbReference type="GO" id="GO:0005737">
    <property type="term" value="C:cytoplasm"/>
    <property type="evidence" value="ECO:0007669"/>
    <property type="project" value="UniProtKB-SubCell"/>
</dbReference>
<dbReference type="GO" id="GO:0004414">
    <property type="term" value="F:homoserine O-acetyltransferase activity"/>
    <property type="evidence" value="ECO:0007669"/>
    <property type="project" value="TreeGrafter"/>
</dbReference>
<dbReference type="GO" id="GO:0008899">
    <property type="term" value="F:homoserine O-succinyltransferase activity"/>
    <property type="evidence" value="ECO:0007669"/>
    <property type="project" value="UniProtKB-UniRule"/>
</dbReference>
<dbReference type="GO" id="GO:0009092">
    <property type="term" value="P:homoserine metabolic process"/>
    <property type="evidence" value="ECO:0007669"/>
    <property type="project" value="TreeGrafter"/>
</dbReference>
<dbReference type="GO" id="GO:0009086">
    <property type="term" value="P:methionine biosynthetic process"/>
    <property type="evidence" value="ECO:0007669"/>
    <property type="project" value="UniProtKB-UniRule"/>
</dbReference>
<dbReference type="FunFam" id="1.10.1740.110:FF:000001">
    <property type="entry name" value="Homoserine O-acetyltransferase"/>
    <property type="match status" value="1"/>
</dbReference>
<dbReference type="Gene3D" id="1.10.1740.110">
    <property type="match status" value="1"/>
</dbReference>
<dbReference type="Gene3D" id="3.40.50.1820">
    <property type="entry name" value="alpha/beta hydrolase"/>
    <property type="match status" value="1"/>
</dbReference>
<dbReference type="HAMAP" id="MF_00296">
    <property type="entry name" value="MetX_acyltransf"/>
    <property type="match status" value="1"/>
</dbReference>
<dbReference type="InterPro" id="IPR000073">
    <property type="entry name" value="AB_hydrolase_1"/>
</dbReference>
<dbReference type="InterPro" id="IPR029058">
    <property type="entry name" value="AB_hydrolase_fold"/>
</dbReference>
<dbReference type="InterPro" id="IPR008220">
    <property type="entry name" value="HAT_MetX-like"/>
</dbReference>
<dbReference type="NCBIfam" id="TIGR01392">
    <property type="entry name" value="homoserO_Ac_trn"/>
    <property type="match status" value="1"/>
</dbReference>
<dbReference type="NCBIfam" id="NF001209">
    <property type="entry name" value="PRK00175.1"/>
    <property type="match status" value="1"/>
</dbReference>
<dbReference type="PANTHER" id="PTHR32268">
    <property type="entry name" value="HOMOSERINE O-ACETYLTRANSFERASE"/>
    <property type="match status" value="1"/>
</dbReference>
<dbReference type="PANTHER" id="PTHR32268:SF11">
    <property type="entry name" value="HOMOSERINE O-ACETYLTRANSFERASE"/>
    <property type="match status" value="1"/>
</dbReference>
<dbReference type="Pfam" id="PF00561">
    <property type="entry name" value="Abhydrolase_1"/>
    <property type="match status" value="1"/>
</dbReference>
<dbReference type="PIRSF" id="PIRSF000443">
    <property type="entry name" value="Homoser_Ac_trans"/>
    <property type="match status" value="1"/>
</dbReference>
<dbReference type="SUPFAM" id="SSF53474">
    <property type="entry name" value="alpha/beta-Hydrolases"/>
    <property type="match status" value="1"/>
</dbReference>
<sequence>MTDVALPTAAPAAFDLPPDSVGVVAPQRMHFAEPLKLRNGSSIAGYDLMVETYGTLNAARSNAVLVCHALNASHHVAGVYAEDPRDVGWWDNMVGPGKPLDTNRFFVIGVNNLGSCFGSTGPMSLNPATGAPYGAAFPVVTVEDWVNAQALVADAFGITQFAAVMGGSLGGMQAVAWSLLYPERLRHCIVVASTPKLSAQNIAFNEVARSAILSDPDFHGGNYYAHGVKPKRGLRVARMIGHITYLSDEDMAEKFGRELKTDDIRFSFDVEFQVESYLRYQGDKFAEYFDANTYLLITRALDYFDPALAFGGDLTRAMAQTQASFLVASFGTDWRFAPSRSRELVKALLDNKRPVSYAEIDAPHGHDAFLLDDPRYHNLMRAYYDRIAEEIGA</sequence>